<reference key="1">
    <citation type="submission" date="2005-07" db="EMBL/GenBank/DDBJ databases">
        <title>Complete sequence of Synechococcus sp. CC9605.</title>
        <authorList>
            <consortium name="US DOE Joint Genome Institute"/>
            <person name="Copeland A."/>
            <person name="Lucas S."/>
            <person name="Lapidus A."/>
            <person name="Barry K."/>
            <person name="Detter J.C."/>
            <person name="Glavina T."/>
            <person name="Hammon N."/>
            <person name="Israni S."/>
            <person name="Pitluck S."/>
            <person name="Schmutz J."/>
            <person name="Martinez M."/>
            <person name="Larimer F."/>
            <person name="Land M."/>
            <person name="Kyrpides N."/>
            <person name="Ivanova N."/>
            <person name="Richardson P."/>
        </authorList>
    </citation>
    <scope>NUCLEOTIDE SEQUENCE [LARGE SCALE GENOMIC DNA]</scope>
    <source>
        <strain>CC9605</strain>
    </source>
</reference>
<protein>
    <recommendedName>
        <fullName evidence="1">Large ribosomal subunit protein uL15</fullName>
    </recommendedName>
    <alternativeName>
        <fullName evidence="3">50S ribosomal protein L15</fullName>
    </alternativeName>
</protein>
<name>RL15_SYNSC</name>
<dbReference type="EMBL" id="CP000110">
    <property type="protein sequence ID" value="ABB34135.1"/>
    <property type="molecule type" value="Genomic_DNA"/>
</dbReference>
<dbReference type="RefSeq" id="WP_011363378.1">
    <property type="nucleotide sequence ID" value="NC_007516.1"/>
</dbReference>
<dbReference type="SMR" id="Q3AMP7"/>
<dbReference type="STRING" id="110662.Syncc9605_0359"/>
<dbReference type="KEGG" id="syd:Syncc9605_0359"/>
<dbReference type="eggNOG" id="COG0200">
    <property type="taxonomic scope" value="Bacteria"/>
</dbReference>
<dbReference type="HOGENOM" id="CLU_055188_4_1_3"/>
<dbReference type="OrthoDB" id="9810293at2"/>
<dbReference type="GO" id="GO:0022625">
    <property type="term" value="C:cytosolic large ribosomal subunit"/>
    <property type="evidence" value="ECO:0007669"/>
    <property type="project" value="TreeGrafter"/>
</dbReference>
<dbReference type="GO" id="GO:0019843">
    <property type="term" value="F:rRNA binding"/>
    <property type="evidence" value="ECO:0007669"/>
    <property type="project" value="UniProtKB-UniRule"/>
</dbReference>
<dbReference type="GO" id="GO:0003735">
    <property type="term" value="F:structural constituent of ribosome"/>
    <property type="evidence" value="ECO:0007669"/>
    <property type="project" value="InterPro"/>
</dbReference>
<dbReference type="GO" id="GO:0006412">
    <property type="term" value="P:translation"/>
    <property type="evidence" value="ECO:0007669"/>
    <property type="project" value="UniProtKB-UniRule"/>
</dbReference>
<dbReference type="Gene3D" id="3.100.10.10">
    <property type="match status" value="1"/>
</dbReference>
<dbReference type="HAMAP" id="MF_01341">
    <property type="entry name" value="Ribosomal_uL15"/>
    <property type="match status" value="1"/>
</dbReference>
<dbReference type="InterPro" id="IPR030878">
    <property type="entry name" value="Ribosomal_uL15"/>
</dbReference>
<dbReference type="InterPro" id="IPR021131">
    <property type="entry name" value="Ribosomal_uL15/eL18"/>
</dbReference>
<dbReference type="InterPro" id="IPR036227">
    <property type="entry name" value="Ribosomal_uL15/eL18_sf"/>
</dbReference>
<dbReference type="InterPro" id="IPR005749">
    <property type="entry name" value="Ribosomal_uL15_bac-type"/>
</dbReference>
<dbReference type="InterPro" id="IPR001196">
    <property type="entry name" value="Ribosomal_uL15_CS"/>
</dbReference>
<dbReference type="NCBIfam" id="TIGR01071">
    <property type="entry name" value="rplO_bact"/>
    <property type="match status" value="1"/>
</dbReference>
<dbReference type="PANTHER" id="PTHR12934">
    <property type="entry name" value="50S RIBOSOMAL PROTEIN L15"/>
    <property type="match status" value="1"/>
</dbReference>
<dbReference type="PANTHER" id="PTHR12934:SF11">
    <property type="entry name" value="LARGE RIBOSOMAL SUBUNIT PROTEIN UL15M"/>
    <property type="match status" value="1"/>
</dbReference>
<dbReference type="Pfam" id="PF00828">
    <property type="entry name" value="Ribosomal_L27A"/>
    <property type="match status" value="1"/>
</dbReference>
<dbReference type="SUPFAM" id="SSF52080">
    <property type="entry name" value="Ribosomal proteins L15p and L18e"/>
    <property type="match status" value="1"/>
</dbReference>
<dbReference type="PROSITE" id="PS00475">
    <property type="entry name" value="RIBOSOMAL_L15"/>
    <property type="match status" value="1"/>
</dbReference>
<gene>
    <name evidence="1" type="primary">rplO</name>
    <name type="ordered locus">Syncc9605_0359</name>
</gene>
<keyword id="KW-0687">Ribonucleoprotein</keyword>
<keyword id="KW-0689">Ribosomal protein</keyword>
<keyword id="KW-0694">RNA-binding</keyword>
<keyword id="KW-0699">rRNA-binding</keyword>
<comment type="function">
    <text evidence="1">Binds to the 23S rRNA.</text>
</comment>
<comment type="subunit">
    <text evidence="1">Part of the 50S ribosomal subunit.</text>
</comment>
<comment type="similarity">
    <text evidence="1">Belongs to the universal ribosomal protein uL15 family.</text>
</comment>
<proteinExistence type="inferred from homology"/>
<organism>
    <name type="scientific">Synechococcus sp. (strain CC9605)</name>
    <dbReference type="NCBI Taxonomy" id="110662"/>
    <lineage>
        <taxon>Bacteria</taxon>
        <taxon>Bacillati</taxon>
        <taxon>Cyanobacteriota</taxon>
        <taxon>Cyanophyceae</taxon>
        <taxon>Synechococcales</taxon>
        <taxon>Synechococcaceae</taxon>
        <taxon>Synechococcus</taxon>
    </lineage>
</organism>
<evidence type="ECO:0000255" key="1">
    <source>
        <dbReference type="HAMAP-Rule" id="MF_01341"/>
    </source>
</evidence>
<evidence type="ECO:0000256" key="2">
    <source>
        <dbReference type="SAM" id="MobiDB-lite"/>
    </source>
</evidence>
<evidence type="ECO:0000305" key="3"/>
<sequence>MTLRLDSLKSNKGARRRKLRKGRGIAAGQGASCGFGMRGQKSRSGRPTRPGFEGGQMPLYRRVPKLKHFPLVNPKHFTVLNVSALNDLKDGSTVNLDSLVKDGIVTSPKHPLKMLGNGELTAKKLTVQAAAFTSSALTKIEAAGGTCDILH</sequence>
<feature type="chain" id="PRO_0000251573" description="Large ribosomal subunit protein uL15">
    <location>
        <begin position="1"/>
        <end position="151"/>
    </location>
</feature>
<feature type="region of interest" description="Disordered" evidence="2">
    <location>
        <begin position="1"/>
        <end position="57"/>
    </location>
</feature>
<feature type="compositionally biased region" description="Basic residues" evidence="2">
    <location>
        <begin position="12"/>
        <end position="23"/>
    </location>
</feature>
<feature type="compositionally biased region" description="Gly residues" evidence="2">
    <location>
        <begin position="25"/>
        <end position="37"/>
    </location>
</feature>
<accession>Q3AMP7</accession>